<organism>
    <name type="scientific">Dehalococcoides mccartyi (strain ATCC BAA-2266 / KCTC 15142 / 195)</name>
    <name type="common">Dehalococcoides ethenogenes (strain 195)</name>
    <dbReference type="NCBI Taxonomy" id="243164"/>
    <lineage>
        <taxon>Bacteria</taxon>
        <taxon>Bacillati</taxon>
        <taxon>Chloroflexota</taxon>
        <taxon>Dehalococcoidia</taxon>
        <taxon>Dehalococcoidales</taxon>
        <taxon>Dehalococcoidaceae</taxon>
        <taxon>Dehalococcoides</taxon>
    </lineage>
</organism>
<name>MUTS_DEHM1</name>
<sequence>MENITPLRKQYLDIKKNYPEAIVFFRLGDFYETFEEDARIAARELEIVLTSREMGKGLKVPLAGIPYHALDNYLSRLINRGYKVAICEQVTKPGETKGLVKRQVTRLVTPGTVVEPNLLDSKQNNFLLSLYLTEDSCGLAFADISTSEFGCTQLDINGLEAEINRLNPAEIILPKSQSLNLPLHLKATISKLDGYYFEADVARERLLKHFECQNLSAYGCENLPLAVSAAGALLNYLEETQKSSLKQLERLAAYTISDYMQIDSHTLSNLEIFRSSGGNSLKGSLLGVLDQTKTAMGGRLLRKFLGQPLLRQEDIEKRLSAVDYFFEESLARASLAKALGQIADMERIANRIRQKTILPKELISLKNSLETVSAIHRQFGLMPPPRLAYFLNGLKPLPEMLDIVNEAINDDPPSTLGEGKVIRSGFNPEMDKLCSLAGDARTFLSQMEAREREQTGIKSLKLGYNRVFGYYIEVSNANLADIPQNYIRKQTLVNAERFITPELKEYENLILNAKERLLEMETGLYEQVLNQLGGFYSALLSNAAALASLDVLSAFAEVAVRNGYVRPLFHSENSLVIHRGRHPMVEQGLGYGSFAANDISLSAEDCQIIILTGPNMAGKSTYLKQTALIVLMAQIGSYVPAETAELCLTDRIFSRIGAREDLSAGQSTFMVEMVETASILNTATSRSLLILDEIGRGTSTYDGLAIAQAVVEYIHSQPSLHAKTLFATHYHELVELANYLPRVKNYNIAVSEDRGEVVFLHRIVPGGVDKSYGIHVAKLAGLPGWVIKRAYEVLTELENPAKKEPKIRNCQPQLLLPLTEQTSALAEEIKGLEIESLTPLAALNKLYELKKKAEEQGL</sequence>
<comment type="function">
    <text evidence="1">This protein is involved in the repair of mismatches in DNA. It is possible that it carries out the mismatch recognition step. This protein has a weak ATPase activity.</text>
</comment>
<comment type="similarity">
    <text evidence="1">Belongs to the DNA mismatch repair MutS family.</text>
</comment>
<dbReference type="EMBL" id="CP000027">
    <property type="protein sequence ID" value="AAW39511.1"/>
    <property type="molecule type" value="Genomic_DNA"/>
</dbReference>
<dbReference type="RefSeq" id="WP_010936909.1">
    <property type="nucleotide sequence ID" value="NC_002936.3"/>
</dbReference>
<dbReference type="SMR" id="Q3Z767"/>
<dbReference type="FunCoup" id="Q3Z767">
    <property type="interactions" value="282"/>
</dbReference>
<dbReference type="STRING" id="243164.DET1219"/>
<dbReference type="GeneID" id="3229472"/>
<dbReference type="KEGG" id="det:DET1219"/>
<dbReference type="PATRIC" id="fig|243164.10.peg.1152"/>
<dbReference type="eggNOG" id="COG0249">
    <property type="taxonomic scope" value="Bacteria"/>
</dbReference>
<dbReference type="HOGENOM" id="CLU_002472_3_1_0"/>
<dbReference type="InParanoid" id="Q3Z767"/>
<dbReference type="Proteomes" id="UP000008289">
    <property type="component" value="Chromosome"/>
</dbReference>
<dbReference type="GO" id="GO:0005829">
    <property type="term" value="C:cytosol"/>
    <property type="evidence" value="ECO:0007669"/>
    <property type="project" value="TreeGrafter"/>
</dbReference>
<dbReference type="GO" id="GO:0005524">
    <property type="term" value="F:ATP binding"/>
    <property type="evidence" value="ECO:0007669"/>
    <property type="project" value="UniProtKB-UniRule"/>
</dbReference>
<dbReference type="GO" id="GO:0140664">
    <property type="term" value="F:ATP-dependent DNA damage sensor activity"/>
    <property type="evidence" value="ECO:0007669"/>
    <property type="project" value="InterPro"/>
</dbReference>
<dbReference type="GO" id="GO:0003684">
    <property type="term" value="F:damaged DNA binding"/>
    <property type="evidence" value="ECO:0007669"/>
    <property type="project" value="UniProtKB-UniRule"/>
</dbReference>
<dbReference type="GO" id="GO:0030983">
    <property type="term" value="F:mismatched DNA binding"/>
    <property type="evidence" value="ECO:0007669"/>
    <property type="project" value="InterPro"/>
</dbReference>
<dbReference type="GO" id="GO:0006298">
    <property type="term" value="P:mismatch repair"/>
    <property type="evidence" value="ECO:0007669"/>
    <property type="project" value="UniProtKB-UniRule"/>
</dbReference>
<dbReference type="CDD" id="cd03284">
    <property type="entry name" value="ABC_MutS1"/>
    <property type="match status" value="1"/>
</dbReference>
<dbReference type="FunFam" id="3.40.1170.10:FF:000001">
    <property type="entry name" value="DNA mismatch repair protein MutS"/>
    <property type="match status" value="1"/>
</dbReference>
<dbReference type="FunFam" id="3.40.50.300:FF:000870">
    <property type="entry name" value="MutS protein homolog 4"/>
    <property type="match status" value="1"/>
</dbReference>
<dbReference type="Gene3D" id="1.10.1420.10">
    <property type="match status" value="2"/>
</dbReference>
<dbReference type="Gene3D" id="3.40.1170.10">
    <property type="entry name" value="DNA repair protein MutS, domain I"/>
    <property type="match status" value="1"/>
</dbReference>
<dbReference type="Gene3D" id="3.30.420.110">
    <property type="entry name" value="MutS, connector domain"/>
    <property type="match status" value="1"/>
</dbReference>
<dbReference type="Gene3D" id="3.40.50.300">
    <property type="entry name" value="P-loop containing nucleotide triphosphate hydrolases"/>
    <property type="match status" value="1"/>
</dbReference>
<dbReference type="HAMAP" id="MF_00096">
    <property type="entry name" value="MutS"/>
    <property type="match status" value="1"/>
</dbReference>
<dbReference type="InterPro" id="IPR005748">
    <property type="entry name" value="DNA_mismatch_repair_MutS"/>
</dbReference>
<dbReference type="InterPro" id="IPR007695">
    <property type="entry name" value="DNA_mismatch_repair_MutS-lik_N"/>
</dbReference>
<dbReference type="InterPro" id="IPR017261">
    <property type="entry name" value="DNA_mismatch_repair_MutS/MSH"/>
</dbReference>
<dbReference type="InterPro" id="IPR000432">
    <property type="entry name" value="DNA_mismatch_repair_MutS_C"/>
</dbReference>
<dbReference type="InterPro" id="IPR007861">
    <property type="entry name" value="DNA_mismatch_repair_MutS_clamp"/>
</dbReference>
<dbReference type="InterPro" id="IPR007696">
    <property type="entry name" value="DNA_mismatch_repair_MutS_core"/>
</dbReference>
<dbReference type="InterPro" id="IPR016151">
    <property type="entry name" value="DNA_mismatch_repair_MutS_N"/>
</dbReference>
<dbReference type="InterPro" id="IPR036187">
    <property type="entry name" value="DNA_mismatch_repair_MutS_sf"/>
</dbReference>
<dbReference type="InterPro" id="IPR007860">
    <property type="entry name" value="DNA_mmatch_repair_MutS_con_dom"/>
</dbReference>
<dbReference type="InterPro" id="IPR045076">
    <property type="entry name" value="MutS"/>
</dbReference>
<dbReference type="InterPro" id="IPR036678">
    <property type="entry name" value="MutS_con_dom_sf"/>
</dbReference>
<dbReference type="InterPro" id="IPR027417">
    <property type="entry name" value="P-loop_NTPase"/>
</dbReference>
<dbReference type="NCBIfam" id="TIGR01070">
    <property type="entry name" value="mutS1"/>
    <property type="match status" value="1"/>
</dbReference>
<dbReference type="NCBIfam" id="NF003810">
    <property type="entry name" value="PRK05399.1"/>
    <property type="match status" value="1"/>
</dbReference>
<dbReference type="PANTHER" id="PTHR11361:SF34">
    <property type="entry name" value="DNA MISMATCH REPAIR PROTEIN MSH1, MITOCHONDRIAL"/>
    <property type="match status" value="1"/>
</dbReference>
<dbReference type="PANTHER" id="PTHR11361">
    <property type="entry name" value="DNA MISMATCH REPAIR PROTEIN MUTS FAMILY MEMBER"/>
    <property type="match status" value="1"/>
</dbReference>
<dbReference type="Pfam" id="PF01624">
    <property type="entry name" value="MutS_I"/>
    <property type="match status" value="1"/>
</dbReference>
<dbReference type="Pfam" id="PF05188">
    <property type="entry name" value="MutS_II"/>
    <property type="match status" value="1"/>
</dbReference>
<dbReference type="Pfam" id="PF05192">
    <property type="entry name" value="MutS_III"/>
    <property type="match status" value="1"/>
</dbReference>
<dbReference type="Pfam" id="PF05190">
    <property type="entry name" value="MutS_IV"/>
    <property type="match status" value="1"/>
</dbReference>
<dbReference type="Pfam" id="PF00488">
    <property type="entry name" value="MutS_V"/>
    <property type="match status" value="1"/>
</dbReference>
<dbReference type="PIRSF" id="PIRSF037677">
    <property type="entry name" value="DNA_mis_repair_Msh6"/>
    <property type="match status" value="1"/>
</dbReference>
<dbReference type="SMART" id="SM00534">
    <property type="entry name" value="MUTSac"/>
    <property type="match status" value="1"/>
</dbReference>
<dbReference type="SMART" id="SM00533">
    <property type="entry name" value="MUTSd"/>
    <property type="match status" value="1"/>
</dbReference>
<dbReference type="SUPFAM" id="SSF55271">
    <property type="entry name" value="DNA repair protein MutS, domain I"/>
    <property type="match status" value="1"/>
</dbReference>
<dbReference type="SUPFAM" id="SSF53150">
    <property type="entry name" value="DNA repair protein MutS, domain II"/>
    <property type="match status" value="1"/>
</dbReference>
<dbReference type="SUPFAM" id="SSF48334">
    <property type="entry name" value="DNA repair protein MutS, domain III"/>
    <property type="match status" value="1"/>
</dbReference>
<dbReference type="SUPFAM" id="SSF52540">
    <property type="entry name" value="P-loop containing nucleoside triphosphate hydrolases"/>
    <property type="match status" value="1"/>
</dbReference>
<dbReference type="PROSITE" id="PS00486">
    <property type="entry name" value="DNA_MISMATCH_REPAIR_2"/>
    <property type="match status" value="1"/>
</dbReference>
<feature type="chain" id="PRO_0000224365" description="DNA mismatch repair protein MutS">
    <location>
        <begin position="1"/>
        <end position="858"/>
    </location>
</feature>
<feature type="binding site" evidence="1">
    <location>
        <begin position="613"/>
        <end position="620"/>
    </location>
    <ligand>
        <name>ATP</name>
        <dbReference type="ChEBI" id="CHEBI:30616"/>
    </ligand>
</feature>
<reference key="1">
    <citation type="journal article" date="2005" name="Science">
        <title>Genome sequence of the PCE-dechlorinating bacterium Dehalococcoides ethenogenes.</title>
        <authorList>
            <person name="Seshadri R."/>
            <person name="Adrian L."/>
            <person name="Fouts D.E."/>
            <person name="Eisen J.A."/>
            <person name="Phillippy A.M."/>
            <person name="Methe B.A."/>
            <person name="Ward N.L."/>
            <person name="Nelson W.C."/>
            <person name="DeBoy R.T."/>
            <person name="Khouri H.M."/>
            <person name="Kolonay J.F."/>
            <person name="Dodson R.J."/>
            <person name="Daugherty S.C."/>
            <person name="Brinkac L.M."/>
            <person name="Sullivan S.A."/>
            <person name="Madupu R."/>
            <person name="Nelson K.E."/>
            <person name="Kang K.H."/>
            <person name="Impraim M."/>
            <person name="Tran K."/>
            <person name="Robinson J.M."/>
            <person name="Forberger H.A."/>
            <person name="Fraser C.M."/>
            <person name="Zinder S.H."/>
            <person name="Heidelberg J.F."/>
        </authorList>
    </citation>
    <scope>NUCLEOTIDE SEQUENCE [LARGE SCALE GENOMIC DNA]</scope>
    <source>
        <strain>ATCC BAA-2266 / KCTC 15142 / 195</strain>
    </source>
</reference>
<evidence type="ECO:0000255" key="1">
    <source>
        <dbReference type="HAMAP-Rule" id="MF_00096"/>
    </source>
</evidence>
<keyword id="KW-0067">ATP-binding</keyword>
<keyword id="KW-0227">DNA damage</keyword>
<keyword id="KW-0234">DNA repair</keyword>
<keyword id="KW-0238">DNA-binding</keyword>
<keyword id="KW-0547">Nucleotide-binding</keyword>
<protein>
    <recommendedName>
        <fullName evidence="1">DNA mismatch repair protein MutS</fullName>
    </recommendedName>
</protein>
<gene>
    <name evidence="1" type="primary">mutS</name>
    <name type="ordered locus">DET1219</name>
</gene>
<accession>Q3Z767</accession>
<proteinExistence type="inferred from homology"/>